<dbReference type="EC" id="2.1.3.15" evidence="1"/>
<dbReference type="EMBL" id="CP000388">
    <property type="protein sequence ID" value="ABG40127.1"/>
    <property type="molecule type" value="Genomic_DNA"/>
</dbReference>
<dbReference type="RefSeq" id="WP_011574436.1">
    <property type="nucleotide sequence ID" value="NC_008228.1"/>
</dbReference>
<dbReference type="SMR" id="Q15VG1"/>
<dbReference type="STRING" id="342610.Patl_1605"/>
<dbReference type="KEGG" id="pat:Patl_1605"/>
<dbReference type="eggNOG" id="COG0777">
    <property type="taxonomic scope" value="Bacteria"/>
</dbReference>
<dbReference type="HOGENOM" id="CLU_015486_1_0_6"/>
<dbReference type="OrthoDB" id="9772975at2"/>
<dbReference type="UniPathway" id="UPA00655">
    <property type="reaction ID" value="UER00711"/>
</dbReference>
<dbReference type="Proteomes" id="UP000001981">
    <property type="component" value="Chromosome"/>
</dbReference>
<dbReference type="GO" id="GO:0009329">
    <property type="term" value="C:acetate CoA-transferase complex"/>
    <property type="evidence" value="ECO:0007669"/>
    <property type="project" value="TreeGrafter"/>
</dbReference>
<dbReference type="GO" id="GO:0003989">
    <property type="term" value="F:acetyl-CoA carboxylase activity"/>
    <property type="evidence" value="ECO:0007669"/>
    <property type="project" value="InterPro"/>
</dbReference>
<dbReference type="GO" id="GO:0005524">
    <property type="term" value="F:ATP binding"/>
    <property type="evidence" value="ECO:0007669"/>
    <property type="project" value="UniProtKB-KW"/>
</dbReference>
<dbReference type="GO" id="GO:0016743">
    <property type="term" value="F:carboxyl- or carbamoyltransferase activity"/>
    <property type="evidence" value="ECO:0007669"/>
    <property type="project" value="UniProtKB-UniRule"/>
</dbReference>
<dbReference type="GO" id="GO:0008270">
    <property type="term" value="F:zinc ion binding"/>
    <property type="evidence" value="ECO:0007669"/>
    <property type="project" value="UniProtKB-UniRule"/>
</dbReference>
<dbReference type="GO" id="GO:0006633">
    <property type="term" value="P:fatty acid biosynthetic process"/>
    <property type="evidence" value="ECO:0007669"/>
    <property type="project" value="UniProtKB-KW"/>
</dbReference>
<dbReference type="GO" id="GO:2001295">
    <property type="term" value="P:malonyl-CoA biosynthetic process"/>
    <property type="evidence" value="ECO:0007669"/>
    <property type="project" value="UniProtKB-UniRule"/>
</dbReference>
<dbReference type="Gene3D" id="3.90.226.10">
    <property type="entry name" value="2-enoyl-CoA Hydratase, Chain A, domain 1"/>
    <property type="match status" value="1"/>
</dbReference>
<dbReference type="HAMAP" id="MF_01395">
    <property type="entry name" value="AcetylCoA_CT_beta"/>
    <property type="match status" value="1"/>
</dbReference>
<dbReference type="InterPro" id="IPR034733">
    <property type="entry name" value="AcCoA_carboxyl_beta"/>
</dbReference>
<dbReference type="InterPro" id="IPR000438">
    <property type="entry name" value="Acetyl_CoA_COase_Trfase_b_su"/>
</dbReference>
<dbReference type="InterPro" id="IPR029045">
    <property type="entry name" value="ClpP/crotonase-like_dom_sf"/>
</dbReference>
<dbReference type="InterPro" id="IPR011762">
    <property type="entry name" value="COA_CT_N"/>
</dbReference>
<dbReference type="InterPro" id="IPR041010">
    <property type="entry name" value="Znf-ACC"/>
</dbReference>
<dbReference type="NCBIfam" id="TIGR00515">
    <property type="entry name" value="accD"/>
    <property type="match status" value="1"/>
</dbReference>
<dbReference type="PANTHER" id="PTHR42995">
    <property type="entry name" value="ACETYL-COENZYME A CARBOXYLASE CARBOXYL TRANSFERASE SUBUNIT BETA, CHLOROPLASTIC"/>
    <property type="match status" value="1"/>
</dbReference>
<dbReference type="PANTHER" id="PTHR42995:SF5">
    <property type="entry name" value="ACETYL-COENZYME A CARBOXYLASE CARBOXYL TRANSFERASE SUBUNIT BETA, CHLOROPLASTIC"/>
    <property type="match status" value="1"/>
</dbReference>
<dbReference type="Pfam" id="PF01039">
    <property type="entry name" value="Carboxyl_trans"/>
    <property type="match status" value="1"/>
</dbReference>
<dbReference type="Pfam" id="PF17848">
    <property type="entry name" value="Zn_ribbon_ACC"/>
    <property type="match status" value="1"/>
</dbReference>
<dbReference type="PRINTS" id="PR01070">
    <property type="entry name" value="ACCCTRFRASEB"/>
</dbReference>
<dbReference type="SUPFAM" id="SSF52096">
    <property type="entry name" value="ClpP/crotonase"/>
    <property type="match status" value="1"/>
</dbReference>
<dbReference type="PROSITE" id="PS50980">
    <property type="entry name" value="COA_CT_NTER"/>
    <property type="match status" value="1"/>
</dbReference>
<comment type="function">
    <text evidence="1">Component of the acetyl coenzyme A carboxylase (ACC) complex. Biotin carboxylase (BC) catalyzes the carboxylation of biotin on its carrier protein (BCCP) and then the CO(2) group is transferred by the transcarboxylase to acetyl-CoA to form malonyl-CoA.</text>
</comment>
<comment type="catalytic activity">
    <reaction evidence="1">
        <text>N(6)-carboxybiotinyl-L-lysyl-[protein] + acetyl-CoA = N(6)-biotinyl-L-lysyl-[protein] + malonyl-CoA</text>
        <dbReference type="Rhea" id="RHEA:54728"/>
        <dbReference type="Rhea" id="RHEA-COMP:10505"/>
        <dbReference type="Rhea" id="RHEA-COMP:10506"/>
        <dbReference type="ChEBI" id="CHEBI:57288"/>
        <dbReference type="ChEBI" id="CHEBI:57384"/>
        <dbReference type="ChEBI" id="CHEBI:83144"/>
        <dbReference type="ChEBI" id="CHEBI:83145"/>
        <dbReference type="EC" id="2.1.3.15"/>
    </reaction>
</comment>
<comment type="cofactor">
    <cofactor evidence="1">
        <name>Zn(2+)</name>
        <dbReference type="ChEBI" id="CHEBI:29105"/>
    </cofactor>
    <text evidence="1">Binds 1 zinc ion per subunit.</text>
</comment>
<comment type="pathway">
    <text evidence="1">Lipid metabolism; malonyl-CoA biosynthesis; malonyl-CoA from acetyl-CoA: step 1/1.</text>
</comment>
<comment type="subunit">
    <text evidence="1">Acetyl-CoA carboxylase is a heterohexamer composed of biotin carboxyl carrier protein (AccB), biotin carboxylase (AccC) and two subunits each of ACCase subunit alpha (AccA) and ACCase subunit beta (AccD).</text>
</comment>
<comment type="subcellular location">
    <subcellularLocation>
        <location evidence="1">Cytoplasm</location>
    </subcellularLocation>
</comment>
<comment type="similarity">
    <text evidence="1">Belongs to the AccD/PCCB family.</text>
</comment>
<accession>Q15VG1</accession>
<feature type="chain" id="PRO_0000359031" description="Acetyl-coenzyme A carboxylase carboxyl transferase subunit beta">
    <location>
        <begin position="1"/>
        <end position="282"/>
    </location>
</feature>
<feature type="domain" description="CoA carboxyltransferase N-terminal" evidence="2">
    <location>
        <begin position="23"/>
        <end position="282"/>
    </location>
</feature>
<feature type="zinc finger region" description="C4-type" evidence="1">
    <location>
        <begin position="27"/>
        <end position="49"/>
    </location>
</feature>
<feature type="binding site" evidence="1">
    <location>
        <position position="27"/>
    </location>
    <ligand>
        <name>Zn(2+)</name>
        <dbReference type="ChEBI" id="CHEBI:29105"/>
    </ligand>
</feature>
<feature type="binding site" evidence="1">
    <location>
        <position position="30"/>
    </location>
    <ligand>
        <name>Zn(2+)</name>
        <dbReference type="ChEBI" id="CHEBI:29105"/>
    </ligand>
</feature>
<feature type="binding site" evidence="1">
    <location>
        <position position="46"/>
    </location>
    <ligand>
        <name>Zn(2+)</name>
        <dbReference type="ChEBI" id="CHEBI:29105"/>
    </ligand>
</feature>
<feature type="binding site" evidence="1">
    <location>
        <position position="49"/>
    </location>
    <ligand>
        <name>Zn(2+)</name>
        <dbReference type="ChEBI" id="CHEBI:29105"/>
    </ligand>
</feature>
<organism>
    <name type="scientific">Pseudoalteromonas atlantica (strain T6c / ATCC BAA-1087)</name>
    <dbReference type="NCBI Taxonomy" id="3042615"/>
    <lineage>
        <taxon>Bacteria</taxon>
        <taxon>Pseudomonadati</taxon>
        <taxon>Pseudomonadota</taxon>
        <taxon>Gammaproteobacteria</taxon>
        <taxon>Alteromonadales</taxon>
        <taxon>Alteromonadaceae</taxon>
        <taxon>Paraglaciecola</taxon>
    </lineage>
</organism>
<proteinExistence type="inferred from homology"/>
<name>ACCD_PSEA6</name>
<gene>
    <name evidence="1" type="primary">accD</name>
    <name type="ordered locus">Patl_1605</name>
</gene>
<protein>
    <recommendedName>
        <fullName evidence="1">Acetyl-coenzyme A carboxylase carboxyl transferase subunit beta</fullName>
        <shortName evidence="1">ACCase subunit beta</shortName>
        <shortName evidence="1">Acetyl-CoA carboxylase carboxyltransferase subunit beta</shortName>
        <ecNumber evidence="1">2.1.3.15</ecNumber>
    </recommendedName>
</protein>
<evidence type="ECO:0000255" key="1">
    <source>
        <dbReference type="HAMAP-Rule" id="MF_01395"/>
    </source>
</evidence>
<evidence type="ECO:0000255" key="2">
    <source>
        <dbReference type="PROSITE-ProRule" id="PRU01136"/>
    </source>
</evidence>
<keyword id="KW-0067">ATP-binding</keyword>
<keyword id="KW-0963">Cytoplasm</keyword>
<keyword id="KW-0275">Fatty acid biosynthesis</keyword>
<keyword id="KW-0276">Fatty acid metabolism</keyword>
<keyword id="KW-0444">Lipid biosynthesis</keyword>
<keyword id="KW-0443">Lipid metabolism</keyword>
<keyword id="KW-0479">Metal-binding</keyword>
<keyword id="KW-0547">Nucleotide-binding</keyword>
<keyword id="KW-0808">Transferase</keyword>
<keyword id="KW-0862">Zinc</keyword>
<keyword id="KW-0863">Zinc-finger</keyword>
<reference key="1">
    <citation type="submission" date="2006-06" db="EMBL/GenBank/DDBJ databases">
        <title>Complete sequence of Pseudoalteromonas atlantica T6c.</title>
        <authorList>
            <consortium name="US DOE Joint Genome Institute"/>
            <person name="Copeland A."/>
            <person name="Lucas S."/>
            <person name="Lapidus A."/>
            <person name="Barry K."/>
            <person name="Detter J.C."/>
            <person name="Glavina del Rio T."/>
            <person name="Hammon N."/>
            <person name="Israni S."/>
            <person name="Dalin E."/>
            <person name="Tice H."/>
            <person name="Pitluck S."/>
            <person name="Saunders E."/>
            <person name="Brettin T."/>
            <person name="Bruce D."/>
            <person name="Han C."/>
            <person name="Tapia R."/>
            <person name="Gilna P."/>
            <person name="Schmutz J."/>
            <person name="Larimer F."/>
            <person name="Land M."/>
            <person name="Hauser L."/>
            <person name="Kyrpides N."/>
            <person name="Kim E."/>
            <person name="Karls A.C."/>
            <person name="Bartlett D."/>
            <person name="Higgins B.P."/>
            <person name="Richardson P."/>
        </authorList>
    </citation>
    <scope>NUCLEOTIDE SEQUENCE [LARGE SCALE GENOMIC DNA]</scope>
    <source>
        <strain>T6c / ATCC BAA-1087</strain>
    </source>
</reference>
<sequence length="282" mass="31127">MSWIEKILPRTKSPTKSNVPEGIWTKCGQCDAVLYKTELEKQLGVCPKCNHHMRVSARARLNQFLDQGERTELGSELEPKDLLKFKDSKKYKDRLVAAQKATNEKDALVVMQGKLKGMPVVVAAFEFAFMGGSMASVVGARFVKAVEACLEHNMPLICFSTSGGARMQEALLSLMQMAKTSAALAKMSEKGLPYISVMTDPTMGGVSASLAMLGDVNVAEPRALIGFAGPRVIEQTVRETLPEGFQRSEFLLEKGAIDVIIDRREMRDRLHSMLSKLHHQQA</sequence>